<accession>Q07749</accession>
<comment type="function">
    <text evidence="2">Depolymerizes growing actin filaments in muscle cells; required for the assembly of actin filaments into the functional contractile myofilament lattice of muscle.</text>
</comment>
<comment type="alternative products">
    <event type="alternative splicing"/>
    <isoform>
        <id>Q07749-1</id>
        <name>c</name>
        <name>ADF2</name>
        <sequence type="displayed"/>
    </isoform>
    <isoform>
        <id>Q07750-1</id>
        <name>a</name>
        <name>ADF1</name>
        <sequence type="external"/>
    </isoform>
    <isoform>
        <id>Q07750-2</id>
        <name>b</name>
        <sequence type="external"/>
    </isoform>
    <text>Isoforms only share an exon that codes for the initiator Met.</text>
</comment>
<comment type="similarity">
    <text evidence="3">Belongs to the actin-binding proteins ADF family.</text>
</comment>
<gene>
    <name evidence="4" type="primary">unc-60</name>
    <name type="ORF">C38C3.5</name>
</gene>
<evidence type="ECO:0000255" key="1">
    <source>
        <dbReference type="PROSITE-ProRule" id="PRU00599"/>
    </source>
</evidence>
<evidence type="ECO:0000303" key="2">
    <source>
    </source>
</evidence>
<evidence type="ECO:0000305" key="3"/>
<evidence type="ECO:0000312" key="4">
    <source>
        <dbReference type="WormBase" id="C38C3.5c"/>
    </source>
</evidence>
<evidence type="ECO:0007829" key="5">
    <source>
        <dbReference type="PDB" id="2LXX"/>
    </source>
</evidence>
<name>ADF2_CAEEL</name>
<sequence length="152" mass="17046">MASGVKVDPSCKNAYDLLHNKHQHSYIIFKIDKNDTAIVVEKVGEKNAPYAEFVEEMKKLVEDGKECRYAAVDVEVTVQRQGAEGTSTLNKVIFVQYCPDNAPVRRRMLYASSVRALKASLGLESLFQVQASEMSDLDEKSVKSDLMSNQRI</sequence>
<proteinExistence type="evidence at protein level"/>
<protein>
    <recommendedName>
        <fullName>Actin-depolymerizing factor 2, isoform c</fullName>
    </recommendedName>
    <alternativeName>
        <fullName>Uncoordinated protein 60</fullName>
    </alternativeName>
</protein>
<reference key="1">
    <citation type="journal article" date="1994" name="Mol. Gen. Genet.">
        <title>The Caenorhabditis elegans unc-60 gene encodes proteins homologous to a family of actin-binding proteins.</title>
        <authorList>
            <person name="McKim K.S."/>
            <person name="Matheson C."/>
            <person name="Marra M.A."/>
            <person name="Wakarchuk M.F."/>
            <person name="Baillie D.L."/>
        </authorList>
    </citation>
    <scope>NUCLEOTIDE SEQUENCE [GENOMIC DNA]</scope>
</reference>
<reference key="2">
    <citation type="journal article" date="1998" name="Science">
        <title>Genome sequence of the nematode C. elegans: a platform for investigating biology.</title>
        <authorList>
            <consortium name="The C. elegans sequencing consortium"/>
        </authorList>
    </citation>
    <scope>NUCLEOTIDE SEQUENCE [LARGE SCALE GENOMIC DNA]</scope>
    <scope>ALTERNATIVE SPLICING</scope>
    <source>
        <strain>Bristol N2</strain>
    </source>
</reference>
<dbReference type="EMBL" id="L18963">
    <property type="protein sequence ID" value="AAC14457.1"/>
    <property type="molecule type" value="Genomic_DNA"/>
</dbReference>
<dbReference type="EMBL" id="FO080816">
    <property type="protein sequence ID" value="CCD67023.1"/>
    <property type="molecule type" value="Genomic_DNA"/>
</dbReference>
<dbReference type="PIR" id="S41727">
    <property type="entry name" value="S41727"/>
</dbReference>
<dbReference type="RefSeq" id="NP_503427.2">
    <molecule id="Q07749-1"/>
    <property type="nucleotide sequence ID" value="NM_071026.7"/>
</dbReference>
<dbReference type="PDB" id="2LXX">
    <property type="method" value="NMR"/>
    <property type="chains" value="A=1-152"/>
</dbReference>
<dbReference type="PDBsum" id="2LXX"/>
<dbReference type="BMRB" id="Q07749"/>
<dbReference type="SMR" id="Q07749"/>
<dbReference type="BioGRID" id="43707">
    <property type="interactions" value="67"/>
</dbReference>
<dbReference type="STRING" id="6239.C38C3.5.1"/>
<dbReference type="PeptideAtlas" id="Q07749"/>
<dbReference type="EnsemblMetazoa" id="C38C3.5.1">
    <molecule id="Q07749-1"/>
    <property type="protein sequence ID" value="C38C3.5.1"/>
    <property type="gene ID" value="WBGene00006794"/>
</dbReference>
<dbReference type="GeneID" id="178640"/>
<dbReference type="KEGG" id="cel:CELE_C38C3.5"/>
<dbReference type="UCSC" id="C38C3.5b.1">
    <molecule id="Q07749-1"/>
    <property type="organism name" value="c. elegans"/>
</dbReference>
<dbReference type="AGR" id="WB:WBGene00006794"/>
<dbReference type="CTD" id="178640"/>
<dbReference type="WormBase" id="C38C3.5c">
    <molecule id="Q07749-1"/>
    <property type="protein sequence ID" value="CE20549"/>
    <property type="gene ID" value="WBGene00006794"/>
    <property type="gene designation" value="unc-60"/>
</dbReference>
<dbReference type="GeneTree" id="ENSGT00950000183000"/>
<dbReference type="OMA" id="YAIYDME"/>
<dbReference type="EvolutionaryTrace" id="Q07749"/>
<dbReference type="Proteomes" id="UP000001940">
    <property type="component" value="Chromosome V"/>
</dbReference>
<dbReference type="Bgee" id="WBGene00006794">
    <property type="expression patterns" value="Expressed in larva and 3 other cell types or tissues"/>
</dbReference>
<dbReference type="GO" id="GO:0015629">
    <property type="term" value="C:actin cytoskeleton"/>
    <property type="evidence" value="ECO:0000318"/>
    <property type="project" value="GO_Central"/>
</dbReference>
<dbReference type="GO" id="GO:0005737">
    <property type="term" value="C:cytoplasm"/>
    <property type="evidence" value="ECO:0000314"/>
    <property type="project" value="WormBase"/>
</dbReference>
<dbReference type="GO" id="GO:1990904">
    <property type="term" value="C:ribonucleoprotein complex"/>
    <property type="evidence" value="ECO:0000353"/>
    <property type="project" value="WormBase"/>
</dbReference>
<dbReference type="GO" id="GO:0005865">
    <property type="term" value="C:striated muscle thin filament"/>
    <property type="evidence" value="ECO:0000314"/>
    <property type="project" value="WormBase"/>
</dbReference>
<dbReference type="GO" id="GO:0051015">
    <property type="term" value="F:actin filament binding"/>
    <property type="evidence" value="ECO:0000314"/>
    <property type="project" value="WormBase"/>
</dbReference>
<dbReference type="GO" id="GO:0030042">
    <property type="term" value="P:actin filament depolymerization"/>
    <property type="evidence" value="ECO:0000314"/>
    <property type="project" value="WormBase"/>
</dbReference>
<dbReference type="GO" id="GO:0030043">
    <property type="term" value="P:actin filament fragmentation"/>
    <property type="evidence" value="ECO:0000318"/>
    <property type="project" value="GO_Central"/>
</dbReference>
<dbReference type="GO" id="GO:0051014">
    <property type="term" value="P:actin filament severing"/>
    <property type="evidence" value="ECO:0000314"/>
    <property type="project" value="WormBase"/>
</dbReference>
<dbReference type="GO" id="GO:0009792">
    <property type="term" value="P:embryo development ending in birth or egg hatching"/>
    <property type="evidence" value="ECO:0000315"/>
    <property type="project" value="WormBase"/>
</dbReference>
<dbReference type="GO" id="GO:0040011">
    <property type="term" value="P:locomotion"/>
    <property type="evidence" value="ECO:0000315"/>
    <property type="project" value="WormBase"/>
</dbReference>
<dbReference type="GO" id="GO:0030838">
    <property type="term" value="P:positive regulation of actin filament polymerization"/>
    <property type="evidence" value="ECO:0000314"/>
    <property type="project" value="WormBase"/>
</dbReference>
<dbReference type="GO" id="GO:0030240">
    <property type="term" value="P:skeletal muscle thin filament assembly"/>
    <property type="evidence" value="ECO:0000315"/>
    <property type="project" value="WormBase"/>
</dbReference>
<dbReference type="CDD" id="cd11286">
    <property type="entry name" value="ADF_cofilin_like"/>
    <property type="match status" value="1"/>
</dbReference>
<dbReference type="FunFam" id="3.40.20.10:FF:000101">
    <property type="entry name" value="Actin-depolymerizing factor 2, isoform c"/>
    <property type="match status" value="1"/>
</dbReference>
<dbReference type="Gene3D" id="3.40.20.10">
    <property type="entry name" value="Severin"/>
    <property type="match status" value="1"/>
</dbReference>
<dbReference type="InterPro" id="IPR002108">
    <property type="entry name" value="ADF-H"/>
</dbReference>
<dbReference type="InterPro" id="IPR029006">
    <property type="entry name" value="ADF-H/Gelsolin-like_dom_sf"/>
</dbReference>
<dbReference type="InterPro" id="IPR017904">
    <property type="entry name" value="ADF/Cofilin"/>
</dbReference>
<dbReference type="PANTHER" id="PTHR11913">
    <property type="entry name" value="COFILIN-RELATED"/>
    <property type="match status" value="1"/>
</dbReference>
<dbReference type="Pfam" id="PF00241">
    <property type="entry name" value="Cofilin_ADF"/>
    <property type="match status" value="1"/>
</dbReference>
<dbReference type="SMART" id="SM00102">
    <property type="entry name" value="ADF"/>
    <property type="match status" value="1"/>
</dbReference>
<dbReference type="SUPFAM" id="SSF55753">
    <property type="entry name" value="Actin depolymerizing proteins"/>
    <property type="match status" value="1"/>
</dbReference>
<dbReference type="PROSITE" id="PS51263">
    <property type="entry name" value="ADF_H"/>
    <property type="match status" value="1"/>
</dbReference>
<keyword id="KW-0002">3D-structure</keyword>
<keyword id="KW-0009">Actin-binding</keyword>
<keyword id="KW-0025">Alternative splicing</keyword>
<keyword id="KW-1185">Reference proteome</keyword>
<feature type="chain" id="PRO_0000214939" description="Actin-depolymerizing factor 2, isoform c">
    <location>
        <begin position="1"/>
        <end position="152"/>
    </location>
</feature>
<feature type="domain" description="ADF-H" evidence="1">
    <location>
        <begin position="4"/>
        <end position="147"/>
    </location>
</feature>
<feature type="helix" evidence="5">
    <location>
        <begin position="9"/>
        <end position="19"/>
    </location>
</feature>
<feature type="strand" evidence="5">
    <location>
        <begin position="23"/>
        <end position="32"/>
    </location>
</feature>
<feature type="turn" evidence="5">
    <location>
        <begin position="33"/>
        <end position="36"/>
    </location>
</feature>
<feature type="strand" evidence="5">
    <location>
        <begin position="37"/>
        <end position="47"/>
    </location>
</feature>
<feature type="helix" evidence="5">
    <location>
        <begin position="50"/>
        <end position="61"/>
    </location>
</feature>
<feature type="strand" evidence="5">
    <location>
        <begin position="68"/>
        <end position="85"/>
    </location>
</feature>
<feature type="strand" evidence="5">
    <location>
        <begin position="87"/>
        <end position="97"/>
    </location>
</feature>
<feature type="helix" evidence="5">
    <location>
        <begin position="104"/>
        <end position="120"/>
    </location>
</feature>
<feature type="strand" evidence="5">
    <location>
        <begin position="128"/>
        <end position="131"/>
    </location>
</feature>
<feature type="turn" evidence="5">
    <location>
        <begin position="134"/>
        <end position="137"/>
    </location>
</feature>
<feature type="helix" evidence="5">
    <location>
        <begin position="139"/>
        <end position="148"/>
    </location>
</feature>
<organism>
    <name type="scientific">Caenorhabditis elegans</name>
    <dbReference type="NCBI Taxonomy" id="6239"/>
    <lineage>
        <taxon>Eukaryota</taxon>
        <taxon>Metazoa</taxon>
        <taxon>Ecdysozoa</taxon>
        <taxon>Nematoda</taxon>
        <taxon>Chromadorea</taxon>
        <taxon>Rhabditida</taxon>
        <taxon>Rhabditina</taxon>
        <taxon>Rhabditomorpha</taxon>
        <taxon>Rhabditoidea</taxon>
        <taxon>Rhabditidae</taxon>
        <taxon>Peloderinae</taxon>
        <taxon>Caenorhabditis</taxon>
    </lineage>
</organism>